<feature type="chain" id="PRO_0000388245" description="Citrate synthase-related protein DDB_G0287281">
    <location>
        <begin position="1"/>
        <end position="417"/>
    </location>
</feature>
<feature type="region of interest" description="Disordered" evidence="1">
    <location>
        <begin position="284"/>
        <end position="317"/>
    </location>
</feature>
<feature type="compositionally biased region" description="Low complexity" evidence="1">
    <location>
        <begin position="286"/>
        <end position="309"/>
    </location>
</feature>
<reference key="1">
    <citation type="journal article" date="2005" name="Nature">
        <title>The genome of the social amoeba Dictyostelium discoideum.</title>
        <authorList>
            <person name="Eichinger L."/>
            <person name="Pachebat J.A."/>
            <person name="Gloeckner G."/>
            <person name="Rajandream M.A."/>
            <person name="Sucgang R."/>
            <person name="Berriman M."/>
            <person name="Song J."/>
            <person name="Olsen R."/>
            <person name="Szafranski K."/>
            <person name="Xu Q."/>
            <person name="Tunggal B."/>
            <person name="Kummerfeld S."/>
            <person name="Madera M."/>
            <person name="Konfortov B.A."/>
            <person name="Rivero F."/>
            <person name="Bankier A.T."/>
            <person name="Lehmann R."/>
            <person name="Hamlin N."/>
            <person name="Davies R."/>
            <person name="Gaudet P."/>
            <person name="Fey P."/>
            <person name="Pilcher K."/>
            <person name="Chen G."/>
            <person name="Saunders D."/>
            <person name="Sodergren E.J."/>
            <person name="Davis P."/>
            <person name="Kerhornou A."/>
            <person name="Nie X."/>
            <person name="Hall N."/>
            <person name="Anjard C."/>
            <person name="Hemphill L."/>
            <person name="Bason N."/>
            <person name="Farbrother P."/>
            <person name="Desany B."/>
            <person name="Just E."/>
            <person name="Morio T."/>
            <person name="Rost R."/>
            <person name="Churcher C.M."/>
            <person name="Cooper J."/>
            <person name="Haydock S."/>
            <person name="van Driessche N."/>
            <person name="Cronin A."/>
            <person name="Goodhead I."/>
            <person name="Muzny D.M."/>
            <person name="Mourier T."/>
            <person name="Pain A."/>
            <person name="Lu M."/>
            <person name="Harper D."/>
            <person name="Lindsay R."/>
            <person name="Hauser H."/>
            <person name="James K.D."/>
            <person name="Quiles M."/>
            <person name="Madan Babu M."/>
            <person name="Saito T."/>
            <person name="Buchrieser C."/>
            <person name="Wardroper A."/>
            <person name="Felder M."/>
            <person name="Thangavelu M."/>
            <person name="Johnson D."/>
            <person name="Knights A."/>
            <person name="Loulseged H."/>
            <person name="Mungall K.L."/>
            <person name="Oliver K."/>
            <person name="Price C."/>
            <person name="Quail M.A."/>
            <person name="Urushihara H."/>
            <person name="Hernandez J."/>
            <person name="Rabbinowitsch E."/>
            <person name="Steffen D."/>
            <person name="Sanders M."/>
            <person name="Ma J."/>
            <person name="Kohara Y."/>
            <person name="Sharp S."/>
            <person name="Simmonds M.N."/>
            <person name="Spiegler S."/>
            <person name="Tivey A."/>
            <person name="Sugano S."/>
            <person name="White B."/>
            <person name="Walker D."/>
            <person name="Woodward J.R."/>
            <person name="Winckler T."/>
            <person name="Tanaka Y."/>
            <person name="Shaulsky G."/>
            <person name="Schleicher M."/>
            <person name="Weinstock G.M."/>
            <person name="Rosenthal A."/>
            <person name="Cox E.C."/>
            <person name="Chisholm R.L."/>
            <person name="Gibbs R.A."/>
            <person name="Loomis W.F."/>
            <person name="Platzer M."/>
            <person name="Kay R.R."/>
            <person name="Williams J.G."/>
            <person name="Dear P.H."/>
            <person name="Noegel A.A."/>
            <person name="Barrell B.G."/>
            <person name="Kuspa A."/>
        </authorList>
    </citation>
    <scope>NUCLEOTIDE SEQUENCE [LARGE SCALE GENOMIC DNA]</scope>
    <source>
        <strain>AX4</strain>
    </source>
</reference>
<protein>
    <recommendedName>
        <fullName>Citrate synthase-related protein DDB_G0287281</fullName>
    </recommendedName>
</protein>
<organism>
    <name type="scientific">Dictyostelium discoideum</name>
    <name type="common">Social amoeba</name>
    <dbReference type="NCBI Taxonomy" id="44689"/>
    <lineage>
        <taxon>Eukaryota</taxon>
        <taxon>Amoebozoa</taxon>
        <taxon>Evosea</taxon>
        <taxon>Eumycetozoa</taxon>
        <taxon>Dictyostelia</taxon>
        <taxon>Dictyosteliales</taxon>
        <taxon>Dictyosteliaceae</taxon>
        <taxon>Dictyostelium</taxon>
    </lineage>
</organism>
<gene>
    <name type="ORF">DDB_G0287281</name>
</gene>
<accession>Q54KL0</accession>
<comment type="similarity">
    <text evidence="2">Belongs to the citrate synthase family.</text>
</comment>
<comment type="caution">
    <text evidence="2">Although highly related to the citrate synthase family, lacks the conserved active His at position 264 which is replaced by an Asn residue.</text>
</comment>
<dbReference type="EMBL" id="AAFI02000099">
    <property type="protein sequence ID" value="EAL63802.1"/>
    <property type="molecule type" value="Genomic_DNA"/>
</dbReference>
<dbReference type="RefSeq" id="XP_637307.1">
    <property type="nucleotide sequence ID" value="XM_632215.1"/>
</dbReference>
<dbReference type="SMR" id="Q54KL0"/>
<dbReference type="FunCoup" id="Q54KL0">
    <property type="interactions" value="31"/>
</dbReference>
<dbReference type="STRING" id="44689.Q54KL0"/>
<dbReference type="PaxDb" id="44689-DDB0220637"/>
<dbReference type="EnsemblProtists" id="EAL63802">
    <property type="protein sequence ID" value="EAL63802"/>
    <property type="gene ID" value="DDB_G0287281"/>
</dbReference>
<dbReference type="GeneID" id="8626044"/>
<dbReference type="KEGG" id="ddi:DDB_G0287281"/>
<dbReference type="dictyBase" id="DDB_G0287281"/>
<dbReference type="VEuPathDB" id="AmoebaDB:DDB_G0287281"/>
<dbReference type="eggNOG" id="KOG2617">
    <property type="taxonomic scope" value="Eukaryota"/>
</dbReference>
<dbReference type="HOGENOM" id="CLU_025068_2_1_1"/>
<dbReference type="InParanoid" id="Q54KL0"/>
<dbReference type="OMA" id="DRYWICA"/>
<dbReference type="PhylomeDB" id="Q54KL0"/>
<dbReference type="PRO" id="PR:Q54KL0"/>
<dbReference type="Proteomes" id="UP000002195">
    <property type="component" value="Chromosome 5"/>
</dbReference>
<dbReference type="GO" id="GO:0005759">
    <property type="term" value="C:mitochondrial matrix"/>
    <property type="evidence" value="ECO:0000318"/>
    <property type="project" value="GO_Central"/>
</dbReference>
<dbReference type="GO" id="GO:0050440">
    <property type="term" value="F:2-methylcitrate synthase activity"/>
    <property type="evidence" value="ECO:0000318"/>
    <property type="project" value="GO_Central"/>
</dbReference>
<dbReference type="GO" id="GO:0004108">
    <property type="term" value="F:citrate (Si)-synthase activity"/>
    <property type="evidence" value="ECO:0000318"/>
    <property type="project" value="GO_Central"/>
</dbReference>
<dbReference type="GO" id="GO:0005975">
    <property type="term" value="P:carbohydrate metabolic process"/>
    <property type="evidence" value="ECO:0000318"/>
    <property type="project" value="GO_Central"/>
</dbReference>
<dbReference type="GO" id="GO:0019679">
    <property type="term" value="P:propionate metabolic process, methylcitrate cycle"/>
    <property type="evidence" value="ECO:0000318"/>
    <property type="project" value="GO_Central"/>
</dbReference>
<dbReference type="GO" id="GO:0006099">
    <property type="term" value="P:tricarboxylic acid cycle"/>
    <property type="evidence" value="ECO:0000318"/>
    <property type="project" value="GO_Central"/>
</dbReference>
<dbReference type="Gene3D" id="1.10.580.10">
    <property type="entry name" value="Citrate Synthase, domain 1"/>
    <property type="match status" value="1"/>
</dbReference>
<dbReference type="Gene3D" id="1.10.230.10">
    <property type="entry name" value="Cytochrome P450-Terp, domain 2"/>
    <property type="match status" value="1"/>
</dbReference>
<dbReference type="InterPro" id="IPR016142">
    <property type="entry name" value="Citrate_synth-like_lrg_a-sub"/>
</dbReference>
<dbReference type="InterPro" id="IPR016143">
    <property type="entry name" value="Citrate_synth-like_sm_a-sub"/>
</dbReference>
<dbReference type="InterPro" id="IPR002020">
    <property type="entry name" value="Citrate_synthase"/>
</dbReference>
<dbReference type="InterPro" id="IPR036969">
    <property type="entry name" value="Citrate_synthase_sf"/>
</dbReference>
<dbReference type="PANTHER" id="PTHR11739">
    <property type="entry name" value="CITRATE SYNTHASE"/>
    <property type="match status" value="1"/>
</dbReference>
<dbReference type="PANTHER" id="PTHR11739:SF25">
    <property type="entry name" value="CITRATE SYNTHASE-RELATED PROTEIN DDB_G0287281"/>
    <property type="match status" value="1"/>
</dbReference>
<dbReference type="Pfam" id="PF00285">
    <property type="entry name" value="Citrate_synt"/>
    <property type="match status" value="1"/>
</dbReference>
<dbReference type="PRINTS" id="PR00143">
    <property type="entry name" value="CITRTSNTHASE"/>
</dbReference>
<dbReference type="SUPFAM" id="SSF48256">
    <property type="entry name" value="Citrate synthase"/>
    <property type="match status" value="1"/>
</dbReference>
<name>Y7281_DICDI</name>
<proteinExistence type="inferred from homology"/>
<evidence type="ECO:0000256" key="1">
    <source>
        <dbReference type="SAM" id="MobiDB-lite"/>
    </source>
</evidence>
<evidence type="ECO:0000305" key="2"/>
<keyword id="KW-1185">Reference proteome</keyword>
<sequence length="417" mass="47706">MSNESKICLVNEDSIYYRGYDIKDLTAVSSFEEVSFLLIYGELPTERELIEYRSELQHYRYIPESLKQVLERIPIYAHPIDVLKTACSFYSTISPESKQNDIYRISNRLIGSFPSILFYWYHFSSNGIRINTLTEVNDSFARHFLKLLNRGNNNNINNNNKFTTEQDEEPILEYVKALDVSLILYAEHGIETASTFSCRLSASTGSDVYSCIGSSIGTMKGVLDDGGSSEAVMYLLQPMKSPEDADKKIMKMINNNQRIIGFSNEFDQRTPIIKEWSKQLSIINKNNNNNNNNNNNNNNNNNNNNNNNNSEDDDDDNSLQTISERVEEIMFDVLKVHANVDFYNATVFHQSNIPTLLFSAISVIARTTGWMANIIEQRCQSKNSLPSLIYTGSDPIPFTPINERVYYHNFKIPNSNL</sequence>